<comment type="function">
    <text evidence="1">Part of the ABC transporter complex MetNIQ involved in methionine import. Responsible for energy coupling to the transport system.</text>
</comment>
<comment type="catalytic activity">
    <reaction evidence="1">
        <text>L-methionine(out) + ATP + H2O = L-methionine(in) + ADP + phosphate + H(+)</text>
        <dbReference type="Rhea" id="RHEA:29779"/>
        <dbReference type="ChEBI" id="CHEBI:15377"/>
        <dbReference type="ChEBI" id="CHEBI:15378"/>
        <dbReference type="ChEBI" id="CHEBI:30616"/>
        <dbReference type="ChEBI" id="CHEBI:43474"/>
        <dbReference type="ChEBI" id="CHEBI:57844"/>
        <dbReference type="ChEBI" id="CHEBI:456216"/>
        <dbReference type="EC" id="7.4.2.11"/>
    </reaction>
</comment>
<comment type="catalytic activity">
    <reaction evidence="1">
        <text>D-methionine(out) + ATP + H2O = D-methionine(in) + ADP + phosphate + H(+)</text>
        <dbReference type="Rhea" id="RHEA:29767"/>
        <dbReference type="ChEBI" id="CHEBI:15377"/>
        <dbReference type="ChEBI" id="CHEBI:15378"/>
        <dbReference type="ChEBI" id="CHEBI:30616"/>
        <dbReference type="ChEBI" id="CHEBI:43474"/>
        <dbReference type="ChEBI" id="CHEBI:57932"/>
        <dbReference type="ChEBI" id="CHEBI:456216"/>
        <dbReference type="EC" id="7.4.2.11"/>
    </reaction>
</comment>
<comment type="subunit">
    <text evidence="1">The complex is composed of two ATP-binding proteins (MetN), two transmembrane proteins (MetI) and a solute-binding protein (MetQ).</text>
</comment>
<comment type="subcellular location">
    <subcellularLocation>
        <location evidence="1">Cell inner membrane</location>
        <topology evidence="1">Peripheral membrane protein</topology>
    </subcellularLocation>
</comment>
<comment type="similarity">
    <text evidence="1">Belongs to the ABC transporter superfamily. Methionine importer (TC 3.A.1.24) family.</text>
</comment>
<proteinExistence type="inferred from homology"/>
<keyword id="KW-0029">Amino-acid transport</keyword>
<keyword id="KW-0067">ATP-binding</keyword>
<keyword id="KW-0997">Cell inner membrane</keyword>
<keyword id="KW-1003">Cell membrane</keyword>
<keyword id="KW-0472">Membrane</keyword>
<keyword id="KW-0547">Nucleotide-binding</keyword>
<keyword id="KW-1278">Translocase</keyword>
<keyword id="KW-0813">Transport</keyword>
<feature type="chain" id="PRO_0000270449" description="Methionine import ATP-binding protein MetN 2">
    <location>
        <begin position="1"/>
        <end position="328"/>
    </location>
</feature>
<feature type="domain" description="ABC transporter" evidence="1">
    <location>
        <begin position="2"/>
        <end position="241"/>
    </location>
</feature>
<feature type="binding site" evidence="1">
    <location>
        <begin position="38"/>
        <end position="45"/>
    </location>
    <ligand>
        <name>ATP</name>
        <dbReference type="ChEBI" id="CHEBI:30616"/>
    </ligand>
</feature>
<gene>
    <name evidence="1" type="primary">metN2</name>
    <name type="ordered locus">YPA_1035</name>
</gene>
<name>METN2_YERPA</name>
<protein>
    <recommendedName>
        <fullName evidence="1">Methionine import ATP-binding protein MetN 2</fullName>
        <ecNumber evidence="1">7.4.2.11</ecNumber>
    </recommendedName>
</protein>
<sequence>MISIERLSKTYPQGGLPMVALEEVSLEIPTGSVFGIVGRSGAGKSTLIRCLNLLERPTSGRIQVDGRELTTLSDRELRLQRQNIGMIFQNFHLLHSRNVWDNIAVGLEIIGMPKAQRQQRVAELLDLVGLSDKAYAFPSQLSGGQKQRVGIARALAAKPSYLLSDEATSALDPETTASILALLSDINRQLGLTIVLITHELDVVKSICDNAALLETGRVVETGAIADLLSDPLSRLGRSLLPTCGPLSVSATPRAELTFFDTLAASPVLSALAQQHAVGVTLLGGGVEFIGGQRVGRLHVDFNRPEGGLNLAEVLQFLNDRGVRAELI</sequence>
<evidence type="ECO:0000255" key="1">
    <source>
        <dbReference type="HAMAP-Rule" id="MF_01719"/>
    </source>
</evidence>
<organism>
    <name type="scientific">Yersinia pestis bv. Antiqua (strain Antiqua)</name>
    <dbReference type="NCBI Taxonomy" id="360102"/>
    <lineage>
        <taxon>Bacteria</taxon>
        <taxon>Pseudomonadati</taxon>
        <taxon>Pseudomonadota</taxon>
        <taxon>Gammaproteobacteria</taxon>
        <taxon>Enterobacterales</taxon>
        <taxon>Yersiniaceae</taxon>
        <taxon>Yersinia</taxon>
    </lineage>
</organism>
<reference key="1">
    <citation type="journal article" date="2006" name="J. Bacteriol.">
        <title>Complete genome sequence of Yersinia pestis strains Antiqua and Nepal516: evidence of gene reduction in an emerging pathogen.</title>
        <authorList>
            <person name="Chain P.S.G."/>
            <person name="Hu P."/>
            <person name="Malfatti S.A."/>
            <person name="Radnedge L."/>
            <person name="Larimer F."/>
            <person name="Vergez L.M."/>
            <person name="Worsham P."/>
            <person name="Chu M.C."/>
            <person name="Andersen G.L."/>
        </authorList>
    </citation>
    <scope>NUCLEOTIDE SEQUENCE [LARGE SCALE GENOMIC DNA]</scope>
    <source>
        <strain>Antiqua</strain>
    </source>
</reference>
<dbReference type="EC" id="7.4.2.11" evidence="1"/>
<dbReference type="EMBL" id="CP000308">
    <property type="protein sequence ID" value="ABG13002.1"/>
    <property type="molecule type" value="Genomic_DNA"/>
</dbReference>
<dbReference type="RefSeq" id="WP_002208776.1">
    <property type="nucleotide sequence ID" value="NZ_CP009906.1"/>
</dbReference>
<dbReference type="SMR" id="Q1C970"/>
<dbReference type="KEGG" id="ypa:YPA_1035"/>
<dbReference type="Proteomes" id="UP000001971">
    <property type="component" value="Chromosome"/>
</dbReference>
<dbReference type="GO" id="GO:0005886">
    <property type="term" value="C:plasma membrane"/>
    <property type="evidence" value="ECO:0007669"/>
    <property type="project" value="UniProtKB-SubCell"/>
</dbReference>
<dbReference type="GO" id="GO:0033232">
    <property type="term" value="F:ABC-type D-methionine transporter activity"/>
    <property type="evidence" value="ECO:0007669"/>
    <property type="project" value="UniProtKB-EC"/>
</dbReference>
<dbReference type="GO" id="GO:0005524">
    <property type="term" value="F:ATP binding"/>
    <property type="evidence" value="ECO:0007669"/>
    <property type="project" value="UniProtKB-KW"/>
</dbReference>
<dbReference type="GO" id="GO:0016887">
    <property type="term" value="F:ATP hydrolysis activity"/>
    <property type="evidence" value="ECO:0007669"/>
    <property type="project" value="InterPro"/>
</dbReference>
<dbReference type="CDD" id="cd03258">
    <property type="entry name" value="ABC_MetN_methionine_transporter"/>
    <property type="match status" value="1"/>
</dbReference>
<dbReference type="FunFam" id="3.40.50.300:FF:000056">
    <property type="entry name" value="Cell division ATP-binding protein FtsE"/>
    <property type="match status" value="1"/>
</dbReference>
<dbReference type="Gene3D" id="3.30.70.260">
    <property type="match status" value="1"/>
</dbReference>
<dbReference type="Gene3D" id="3.40.50.300">
    <property type="entry name" value="P-loop containing nucleotide triphosphate hydrolases"/>
    <property type="match status" value="1"/>
</dbReference>
<dbReference type="InterPro" id="IPR003593">
    <property type="entry name" value="AAA+_ATPase"/>
</dbReference>
<dbReference type="InterPro" id="IPR003439">
    <property type="entry name" value="ABC_transporter-like_ATP-bd"/>
</dbReference>
<dbReference type="InterPro" id="IPR017871">
    <property type="entry name" value="ABC_transporter-like_CS"/>
</dbReference>
<dbReference type="InterPro" id="IPR045865">
    <property type="entry name" value="ACT-like_dom_sf"/>
</dbReference>
<dbReference type="InterPro" id="IPR041701">
    <property type="entry name" value="MetN_ABC"/>
</dbReference>
<dbReference type="InterPro" id="IPR050086">
    <property type="entry name" value="MetN_ABC_transporter-like"/>
</dbReference>
<dbReference type="InterPro" id="IPR018449">
    <property type="entry name" value="NIL_domain"/>
</dbReference>
<dbReference type="InterPro" id="IPR027417">
    <property type="entry name" value="P-loop_NTPase"/>
</dbReference>
<dbReference type="PANTHER" id="PTHR43166">
    <property type="entry name" value="AMINO ACID IMPORT ATP-BINDING PROTEIN"/>
    <property type="match status" value="1"/>
</dbReference>
<dbReference type="PANTHER" id="PTHR43166:SF30">
    <property type="entry name" value="METHIONINE IMPORT ATP-BINDING PROTEIN METN"/>
    <property type="match status" value="1"/>
</dbReference>
<dbReference type="Pfam" id="PF00005">
    <property type="entry name" value="ABC_tran"/>
    <property type="match status" value="1"/>
</dbReference>
<dbReference type="Pfam" id="PF09383">
    <property type="entry name" value="NIL"/>
    <property type="match status" value="1"/>
</dbReference>
<dbReference type="SMART" id="SM00382">
    <property type="entry name" value="AAA"/>
    <property type="match status" value="1"/>
</dbReference>
<dbReference type="SMART" id="SM00930">
    <property type="entry name" value="NIL"/>
    <property type="match status" value="1"/>
</dbReference>
<dbReference type="SUPFAM" id="SSF55021">
    <property type="entry name" value="ACT-like"/>
    <property type="match status" value="1"/>
</dbReference>
<dbReference type="SUPFAM" id="SSF52540">
    <property type="entry name" value="P-loop containing nucleoside triphosphate hydrolases"/>
    <property type="match status" value="1"/>
</dbReference>
<dbReference type="PROSITE" id="PS00211">
    <property type="entry name" value="ABC_TRANSPORTER_1"/>
    <property type="match status" value="1"/>
</dbReference>
<dbReference type="PROSITE" id="PS50893">
    <property type="entry name" value="ABC_TRANSPORTER_2"/>
    <property type="match status" value="1"/>
</dbReference>
<dbReference type="PROSITE" id="PS51264">
    <property type="entry name" value="METN"/>
    <property type="match status" value="1"/>
</dbReference>
<accession>Q1C970</accession>